<accession>Q0VR01</accession>
<reference key="1">
    <citation type="journal article" date="2006" name="Nat. Biotechnol.">
        <title>Genome sequence of the ubiquitous hydrocarbon-degrading marine bacterium Alcanivorax borkumensis.</title>
        <authorList>
            <person name="Schneiker S."/>
            <person name="Martins dos Santos V.A.P."/>
            <person name="Bartels D."/>
            <person name="Bekel T."/>
            <person name="Brecht M."/>
            <person name="Buhrmester J."/>
            <person name="Chernikova T.N."/>
            <person name="Denaro R."/>
            <person name="Ferrer M."/>
            <person name="Gertler C."/>
            <person name="Goesmann A."/>
            <person name="Golyshina O.V."/>
            <person name="Kaminski F."/>
            <person name="Khachane A.N."/>
            <person name="Lang S."/>
            <person name="Linke B."/>
            <person name="McHardy A.C."/>
            <person name="Meyer F."/>
            <person name="Nechitaylo T."/>
            <person name="Puehler A."/>
            <person name="Regenhardt D."/>
            <person name="Rupp O."/>
            <person name="Sabirova J.S."/>
            <person name="Selbitschka W."/>
            <person name="Yakimov M.M."/>
            <person name="Timmis K.N."/>
            <person name="Vorhoelter F.-J."/>
            <person name="Weidner S."/>
            <person name="Kaiser O."/>
            <person name="Golyshin P.N."/>
        </authorList>
    </citation>
    <scope>NUCLEOTIDE SEQUENCE [LARGE SCALE GENOMIC DNA]</scope>
    <source>
        <strain>ATCC 700651 / DSM 11573 / NCIMB 13689 / SK2</strain>
    </source>
</reference>
<proteinExistence type="inferred from homology"/>
<sequence>MTNNNDPSLQAQSLRDQLNDWSYRYYVQDDPAVPDAEYDRVFRALKDLEAQYPDLVTADSPTQRVGDVPLDAFEQVQHEVPMLSLDNAFDDEELWAFDKRIRERLDVSEIIDYVAEPKLDGLAVSLLYENGELVRAATRGDGQTGENITVNARTIRSVPLKLRGNDVPKRLEVRGEVVMPHAGFEELNARQQEAGLKLFANPRNAAAGSLRQLDSRITASRPLEFYAYSMAQLEGWEHPPTHSAMLDALRDWGLRVNPEIRVCHGVEALLRFYQGILEKREHLDYDIDGVVYKVNRFDWQDDLGFVSRAPRWAIAHKFPAQEELTVLNGVDWQVGRTGALTPVARLEPVHVGGVIVSNATLHNIDEIQRLDIRIGDTVVVYRAGDVIPKVVRALPERRPANAQGIALPSSCPVCGSEILRGHDQVVARCTGGLICGDQRREAIKHFASRRAMDIDGLGDKLVDALVDQELITTVADLYRLKAEQVAGLERMGEKSADNLIAALEASKTVGLGRFLFALGILQIGEETAKNLADCFGDLDSIRHAPLLLLLAVPDVGLEVAKAIGAFFAESDNEAVIDGLLAQGVSPQASGVPSAAFVKSLTLAQLLKSAKRLGMNLEGIGDKSLDILGSHFRTVTELSAAAAEGAGAEPKGVRSGVMTQLAKALAENDWRGRLQDAEKKVADMAARAPQEMESQPLEGQTWVLTGTLEQFTRNQAKQALQQLGAKVAGSVSKNTRMVVAGASAGSKLAKAESLGIEVCDEAALLSLLNQHGIDPGAL</sequence>
<protein>
    <recommendedName>
        <fullName evidence="1">DNA ligase</fullName>
        <ecNumber evidence="1">6.5.1.2</ecNumber>
    </recommendedName>
    <alternativeName>
        <fullName evidence="1">Polydeoxyribonucleotide synthase [NAD(+)]</fullName>
    </alternativeName>
</protein>
<evidence type="ECO:0000255" key="1">
    <source>
        <dbReference type="HAMAP-Rule" id="MF_01588"/>
    </source>
</evidence>
<gene>
    <name evidence="1" type="primary">ligA</name>
    <name type="ordered locus">ABO_0949</name>
</gene>
<name>DNLJ_ALCBS</name>
<dbReference type="EC" id="6.5.1.2" evidence="1"/>
<dbReference type="EMBL" id="AM286690">
    <property type="protein sequence ID" value="CAL16397.1"/>
    <property type="molecule type" value="Genomic_DNA"/>
</dbReference>
<dbReference type="RefSeq" id="WP_011588233.1">
    <property type="nucleotide sequence ID" value="NC_008260.1"/>
</dbReference>
<dbReference type="SMR" id="Q0VR01"/>
<dbReference type="STRING" id="393595.ABO_0949"/>
<dbReference type="KEGG" id="abo:ABO_0949"/>
<dbReference type="eggNOG" id="COG0272">
    <property type="taxonomic scope" value="Bacteria"/>
</dbReference>
<dbReference type="HOGENOM" id="CLU_007764_2_1_6"/>
<dbReference type="OrthoDB" id="9759736at2"/>
<dbReference type="Proteomes" id="UP000008871">
    <property type="component" value="Chromosome"/>
</dbReference>
<dbReference type="GO" id="GO:0005829">
    <property type="term" value="C:cytosol"/>
    <property type="evidence" value="ECO:0007669"/>
    <property type="project" value="TreeGrafter"/>
</dbReference>
<dbReference type="GO" id="GO:0003677">
    <property type="term" value="F:DNA binding"/>
    <property type="evidence" value="ECO:0007669"/>
    <property type="project" value="InterPro"/>
</dbReference>
<dbReference type="GO" id="GO:0003911">
    <property type="term" value="F:DNA ligase (NAD+) activity"/>
    <property type="evidence" value="ECO:0007669"/>
    <property type="project" value="UniProtKB-UniRule"/>
</dbReference>
<dbReference type="GO" id="GO:0046872">
    <property type="term" value="F:metal ion binding"/>
    <property type="evidence" value="ECO:0007669"/>
    <property type="project" value="UniProtKB-KW"/>
</dbReference>
<dbReference type="GO" id="GO:0006281">
    <property type="term" value="P:DNA repair"/>
    <property type="evidence" value="ECO:0007669"/>
    <property type="project" value="UniProtKB-KW"/>
</dbReference>
<dbReference type="GO" id="GO:0006260">
    <property type="term" value="P:DNA replication"/>
    <property type="evidence" value="ECO:0007669"/>
    <property type="project" value="UniProtKB-KW"/>
</dbReference>
<dbReference type="CDD" id="cd17748">
    <property type="entry name" value="BRCT_DNA_ligase_like"/>
    <property type="match status" value="1"/>
</dbReference>
<dbReference type="CDD" id="cd00114">
    <property type="entry name" value="LIGANc"/>
    <property type="match status" value="1"/>
</dbReference>
<dbReference type="FunFam" id="1.10.150.20:FF:000007">
    <property type="entry name" value="DNA ligase"/>
    <property type="match status" value="1"/>
</dbReference>
<dbReference type="FunFam" id="1.10.287.610:FF:000002">
    <property type="entry name" value="DNA ligase"/>
    <property type="match status" value="1"/>
</dbReference>
<dbReference type="FunFam" id="2.40.50.140:FF:000012">
    <property type="entry name" value="DNA ligase"/>
    <property type="match status" value="1"/>
</dbReference>
<dbReference type="FunFam" id="3.30.470.30:FF:000001">
    <property type="entry name" value="DNA ligase"/>
    <property type="match status" value="1"/>
</dbReference>
<dbReference type="Gene3D" id="6.20.10.30">
    <property type="match status" value="1"/>
</dbReference>
<dbReference type="Gene3D" id="1.10.150.20">
    <property type="entry name" value="5' to 3' exonuclease, C-terminal subdomain"/>
    <property type="match status" value="2"/>
</dbReference>
<dbReference type="Gene3D" id="3.40.50.10190">
    <property type="entry name" value="BRCT domain"/>
    <property type="match status" value="1"/>
</dbReference>
<dbReference type="Gene3D" id="3.30.470.30">
    <property type="entry name" value="DNA ligase/mRNA capping enzyme"/>
    <property type="match status" value="1"/>
</dbReference>
<dbReference type="Gene3D" id="1.10.287.610">
    <property type="entry name" value="Helix hairpin bin"/>
    <property type="match status" value="1"/>
</dbReference>
<dbReference type="Gene3D" id="2.40.50.140">
    <property type="entry name" value="Nucleic acid-binding proteins"/>
    <property type="match status" value="1"/>
</dbReference>
<dbReference type="HAMAP" id="MF_01588">
    <property type="entry name" value="DNA_ligase_A"/>
    <property type="match status" value="1"/>
</dbReference>
<dbReference type="InterPro" id="IPR001357">
    <property type="entry name" value="BRCT_dom"/>
</dbReference>
<dbReference type="InterPro" id="IPR036420">
    <property type="entry name" value="BRCT_dom_sf"/>
</dbReference>
<dbReference type="InterPro" id="IPR041663">
    <property type="entry name" value="DisA/LigA_HHH"/>
</dbReference>
<dbReference type="InterPro" id="IPR001679">
    <property type="entry name" value="DNA_ligase"/>
</dbReference>
<dbReference type="InterPro" id="IPR018239">
    <property type="entry name" value="DNA_ligase_AS"/>
</dbReference>
<dbReference type="InterPro" id="IPR033136">
    <property type="entry name" value="DNA_ligase_CS"/>
</dbReference>
<dbReference type="InterPro" id="IPR013839">
    <property type="entry name" value="DNAligase_adenylation"/>
</dbReference>
<dbReference type="InterPro" id="IPR013840">
    <property type="entry name" value="DNAligase_N"/>
</dbReference>
<dbReference type="InterPro" id="IPR003583">
    <property type="entry name" value="Hlx-hairpin-Hlx_DNA-bd_motif"/>
</dbReference>
<dbReference type="InterPro" id="IPR012340">
    <property type="entry name" value="NA-bd_OB-fold"/>
</dbReference>
<dbReference type="InterPro" id="IPR004150">
    <property type="entry name" value="NAD_DNA_ligase_OB"/>
</dbReference>
<dbReference type="InterPro" id="IPR010994">
    <property type="entry name" value="RuvA_2-like"/>
</dbReference>
<dbReference type="InterPro" id="IPR004149">
    <property type="entry name" value="Znf_DNAligase_C4"/>
</dbReference>
<dbReference type="NCBIfam" id="TIGR00575">
    <property type="entry name" value="dnlj"/>
    <property type="match status" value="1"/>
</dbReference>
<dbReference type="NCBIfam" id="NF005932">
    <property type="entry name" value="PRK07956.1"/>
    <property type="match status" value="1"/>
</dbReference>
<dbReference type="PANTHER" id="PTHR23389">
    <property type="entry name" value="CHROMOSOME TRANSMISSION FIDELITY FACTOR 18"/>
    <property type="match status" value="1"/>
</dbReference>
<dbReference type="PANTHER" id="PTHR23389:SF9">
    <property type="entry name" value="DNA LIGASE"/>
    <property type="match status" value="1"/>
</dbReference>
<dbReference type="Pfam" id="PF00533">
    <property type="entry name" value="BRCT"/>
    <property type="match status" value="1"/>
</dbReference>
<dbReference type="Pfam" id="PF01653">
    <property type="entry name" value="DNA_ligase_aden"/>
    <property type="match status" value="1"/>
</dbReference>
<dbReference type="Pfam" id="PF03120">
    <property type="entry name" value="DNA_ligase_OB"/>
    <property type="match status" value="1"/>
</dbReference>
<dbReference type="Pfam" id="PF03119">
    <property type="entry name" value="DNA_ligase_ZBD"/>
    <property type="match status" value="1"/>
</dbReference>
<dbReference type="Pfam" id="PF12826">
    <property type="entry name" value="HHH_2"/>
    <property type="match status" value="1"/>
</dbReference>
<dbReference type="Pfam" id="PF14520">
    <property type="entry name" value="HHH_5"/>
    <property type="match status" value="1"/>
</dbReference>
<dbReference type="Pfam" id="PF22745">
    <property type="entry name" value="Nlig-Ia"/>
    <property type="match status" value="1"/>
</dbReference>
<dbReference type="PIRSF" id="PIRSF001604">
    <property type="entry name" value="LigA"/>
    <property type="match status" value="1"/>
</dbReference>
<dbReference type="SMART" id="SM00292">
    <property type="entry name" value="BRCT"/>
    <property type="match status" value="1"/>
</dbReference>
<dbReference type="SMART" id="SM00278">
    <property type="entry name" value="HhH1"/>
    <property type="match status" value="3"/>
</dbReference>
<dbReference type="SMART" id="SM00532">
    <property type="entry name" value="LIGANc"/>
    <property type="match status" value="1"/>
</dbReference>
<dbReference type="SUPFAM" id="SSF52113">
    <property type="entry name" value="BRCT domain"/>
    <property type="match status" value="1"/>
</dbReference>
<dbReference type="SUPFAM" id="SSF56091">
    <property type="entry name" value="DNA ligase/mRNA capping enzyme, catalytic domain"/>
    <property type="match status" value="1"/>
</dbReference>
<dbReference type="SUPFAM" id="SSF50249">
    <property type="entry name" value="Nucleic acid-binding proteins"/>
    <property type="match status" value="1"/>
</dbReference>
<dbReference type="SUPFAM" id="SSF47781">
    <property type="entry name" value="RuvA domain 2-like"/>
    <property type="match status" value="1"/>
</dbReference>
<dbReference type="PROSITE" id="PS50172">
    <property type="entry name" value="BRCT"/>
    <property type="match status" value="1"/>
</dbReference>
<dbReference type="PROSITE" id="PS01055">
    <property type="entry name" value="DNA_LIGASE_N1"/>
    <property type="match status" value="1"/>
</dbReference>
<dbReference type="PROSITE" id="PS01056">
    <property type="entry name" value="DNA_LIGASE_N2"/>
    <property type="match status" value="1"/>
</dbReference>
<feature type="chain" id="PRO_0000313107" description="DNA ligase">
    <location>
        <begin position="1"/>
        <end position="777"/>
    </location>
</feature>
<feature type="domain" description="BRCT" evidence="1">
    <location>
        <begin position="691"/>
        <end position="777"/>
    </location>
</feature>
<feature type="active site" description="N6-AMP-lysine intermediate" evidence="1">
    <location>
        <position position="118"/>
    </location>
</feature>
<feature type="binding site" evidence="1">
    <location>
        <begin position="35"/>
        <end position="39"/>
    </location>
    <ligand>
        <name>NAD(+)</name>
        <dbReference type="ChEBI" id="CHEBI:57540"/>
    </ligand>
</feature>
<feature type="binding site" evidence="1">
    <location>
        <begin position="84"/>
        <end position="85"/>
    </location>
    <ligand>
        <name>NAD(+)</name>
        <dbReference type="ChEBI" id="CHEBI:57540"/>
    </ligand>
</feature>
<feature type="binding site" evidence="1">
    <location>
        <position position="116"/>
    </location>
    <ligand>
        <name>NAD(+)</name>
        <dbReference type="ChEBI" id="CHEBI:57540"/>
    </ligand>
</feature>
<feature type="binding site" evidence="1">
    <location>
        <position position="139"/>
    </location>
    <ligand>
        <name>NAD(+)</name>
        <dbReference type="ChEBI" id="CHEBI:57540"/>
    </ligand>
</feature>
<feature type="binding site" evidence="1">
    <location>
        <position position="176"/>
    </location>
    <ligand>
        <name>NAD(+)</name>
        <dbReference type="ChEBI" id="CHEBI:57540"/>
    </ligand>
</feature>
<feature type="binding site" evidence="1">
    <location>
        <position position="293"/>
    </location>
    <ligand>
        <name>NAD(+)</name>
        <dbReference type="ChEBI" id="CHEBI:57540"/>
    </ligand>
</feature>
<feature type="binding site" evidence="1">
    <location>
        <position position="317"/>
    </location>
    <ligand>
        <name>NAD(+)</name>
        <dbReference type="ChEBI" id="CHEBI:57540"/>
    </ligand>
</feature>
<feature type="binding site" evidence="1">
    <location>
        <position position="411"/>
    </location>
    <ligand>
        <name>Zn(2+)</name>
        <dbReference type="ChEBI" id="CHEBI:29105"/>
    </ligand>
</feature>
<feature type="binding site" evidence="1">
    <location>
        <position position="414"/>
    </location>
    <ligand>
        <name>Zn(2+)</name>
        <dbReference type="ChEBI" id="CHEBI:29105"/>
    </ligand>
</feature>
<feature type="binding site" evidence="1">
    <location>
        <position position="429"/>
    </location>
    <ligand>
        <name>Zn(2+)</name>
        <dbReference type="ChEBI" id="CHEBI:29105"/>
    </ligand>
</feature>
<feature type="binding site" evidence="1">
    <location>
        <position position="435"/>
    </location>
    <ligand>
        <name>Zn(2+)</name>
        <dbReference type="ChEBI" id="CHEBI:29105"/>
    </ligand>
</feature>
<comment type="function">
    <text evidence="1">DNA ligase that catalyzes the formation of phosphodiester linkages between 5'-phosphoryl and 3'-hydroxyl groups in double-stranded DNA using NAD as a coenzyme and as the energy source for the reaction. It is essential for DNA replication and repair of damaged DNA.</text>
</comment>
<comment type="catalytic activity">
    <reaction evidence="1">
        <text>NAD(+) + (deoxyribonucleotide)n-3'-hydroxyl + 5'-phospho-(deoxyribonucleotide)m = (deoxyribonucleotide)n+m + AMP + beta-nicotinamide D-nucleotide.</text>
        <dbReference type="EC" id="6.5.1.2"/>
    </reaction>
</comment>
<comment type="cofactor">
    <cofactor evidence="1">
        <name>Mg(2+)</name>
        <dbReference type="ChEBI" id="CHEBI:18420"/>
    </cofactor>
    <cofactor evidence="1">
        <name>Mn(2+)</name>
        <dbReference type="ChEBI" id="CHEBI:29035"/>
    </cofactor>
</comment>
<comment type="similarity">
    <text evidence="1">Belongs to the NAD-dependent DNA ligase family. LigA subfamily.</text>
</comment>
<keyword id="KW-0227">DNA damage</keyword>
<keyword id="KW-0234">DNA repair</keyword>
<keyword id="KW-0235">DNA replication</keyword>
<keyword id="KW-0436">Ligase</keyword>
<keyword id="KW-0460">Magnesium</keyword>
<keyword id="KW-0464">Manganese</keyword>
<keyword id="KW-0479">Metal-binding</keyword>
<keyword id="KW-0520">NAD</keyword>
<keyword id="KW-1185">Reference proteome</keyword>
<keyword id="KW-0862">Zinc</keyword>
<organism>
    <name type="scientific">Alcanivorax borkumensis (strain ATCC 700651 / DSM 11573 / NCIMB 13689 / SK2)</name>
    <dbReference type="NCBI Taxonomy" id="393595"/>
    <lineage>
        <taxon>Bacteria</taxon>
        <taxon>Pseudomonadati</taxon>
        <taxon>Pseudomonadota</taxon>
        <taxon>Gammaproteobacteria</taxon>
        <taxon>Oceanospirillales</taxon>
        <taxon>Alcanivoracaceae</taxon>
        <taxon>Alcanivorax</taxon>
    </lineage>
</organism>